<evidence type="ECO:0000255" key="1"/>
<evidence type="ECO:0000256" key="2">
    <source>
        <dbReference type="SAM" id="MobiDB-lite"/>
    </source>
</evidence>
<evidence type="ECO:0000269" key="3">
    <source>
    </source>
</evidence>
<evidence type="ECO:0000269" key="4">
    <source>
    </source>
</evidence>
<evidence type="ECO:0000269" key="5">
    <source>
    </source>
</evidence>
<evidence type="ECO:0000269" key="6">
    <source>
    </source>
</evidence>
<evidence type="ECO:0000269" key="7">
    <source>
    </source>
</evidence>
<evidence type="ECO:0000269" key="8">
    <source>
    </source>
</evidence>
<evidence type="ECO:0000303" key="9">
    <source>
    </source>
</evidence>
<evidence type="ECO:0000303" key="10">
    <source>
    </source>
</evidence>
<evidence type="ECO:0000303" key="11">
    <source>
    </source>
</evidence>
<evidence type="ECO:0000303" key="12">
    <source>
    </source>
</evidence>
<evidence type="ECO:0000305" key="13"/>
<evidence type="ECO:0007744" key="14">
    <source>
    </source>
</evidence>
<evidence type="ECO:0007744" key="15">
    <source>
    </source>
</evidence>
<evidence type="ECO:0007744" key="16">
    <source>
    </source>
</evidence>
<evidence type="ECO:0007744" key="17">
    <source>
    </source>
</evidence>
<protein>
    <recommendedName>
        <fullName>Serine/threonine-protein phosphatase 2A 56 kDa regulatory subunit delta isoform</fullName>
    </recommendedName>
    <alternativeName>
        <fullName>PP2A B subunit isoform B'-delta</fullName>
    </alternativeName>
    <alternativeName>
        <fullName>PP2A B subunit isoform B56-delta</fullName>
    </alternativeName>
    <alternativeName>
        <fullName>PP2A B subunit isoform PR61-delta</fullName>
    </alternativeName>
    <alternativeName>
        <fullName>PP2A B subunit isoform R5-delta</fullName>
    </alternativeName>
</protein>
<dbReference type="EMBL" id="L76702">
    <property type="protein sequence ID" value="AAB69751.1"/>
    <property type="molecule type" value="mRNA"/>
</dbReference>
<dbReference type="EMBL" id="AB000634">
    <property type="protein sequence ID" value="BAA20381.1"/>
    <property type="molecule type" value="mRNA"/>
</dbReference>
<dbReference type="EMBL" id="AB000635">
    <property type="protein sequence ID" value="BAA20382.1"/>
    <property type="molecule type" value="mRNA"/>
</dbReference>
<dbReference type="EMBL" id="D78360">
    <property type="protein sequence ID" value="BAA11372.1"/>
    <property type="molecule type" value="mRNA"/>
</dbReference>
<dbReference type="EMBL" id="AK290604">
    <property type="protein sequence ID" value="BAF83293.1"/>
    <property type="molecule type" value="mRNA"/>
</dbReference>
<dbReference type="EMBL" id="AB451342">
    <property type="protein sequence ID" value="BAG70156.1"/>
    <property type="molecule type" value="mRNA"/>
</dbReference>
<dbReference type="EMBL" id="AB451357">
    <property type="protein sequence ID" value="BAG70171.1"/>
    <property type="molecule type" value="mRNA"/>
</dbReference>
<dbReference type="EMBL" id="AL136304">
    <property type="status" value="NOT_ANNOTATED_CDS"/>
    <property type="molecule type" value="Genomic_DNA"/>
</dbReference>
<dbReference type="EMBL" id="CH471081">
    <property type="protein sequence ID" value="EAX04133.1"/>
    <property type="molecule type" value="Genomic_DNA"/>
</dbReference>
<dbReference type="EMBL" id="BC010692">
    <property type="protein sequence ID" value="AAH10692.1"/>
    <property type="molecule type" value="mRNA"/>
</dbReference>
<dbReference type="EMBL" id="BC001095">
    <property type="protein sequence ID" value="AAH01095.1"/>
    <property type="molecule type" value="mRNA"/>
</dbReference>
<dbReference type="EMBL" id="BC001175">
    <property type="protein sequence ID" value="AAH01175.1"/>
    <property type="molecule type" value="mRNA"/>
</dbReference>
<dbReference type="CCDS" id="CCDS43464.1">
    <molecule id="Q14738-3"/>
</dbReference>
<dbReference type="CCDS" id="CCDS4878.1">
    <molecule id="Q14738-1"/>
</dbReference>
<dbReference type="CCDS" id="CCDS55002.1">
    <molecule id="Q14738-2"/>
</dbReference>
<dbReference type="PIR" id="S68686">
    <property type="entry name" value="S68686"/>
</dbReference>
<dbReference type="RefSeq" id="NP_001257405.1">
    <property type="nucleotide sequence ID" value="NM_001270476.1"/>
</dbReference>
<dbReference type="RefSeq" id="NP_006236.1">
    <molecule id="Q14738-1"/>
    <property type="nucleotide sequence ID" value="NM_006245.4"/>
</dbReference>
<dbReference type="RefSeq" id="NP_851307.1">
    <molecule id="Q14738-2"/>
    <property type="nucleotide sequence ID" value="NM_180976.3"/>
</dbReference>
<dbReference type="RefSeq" id="NP_851308.1">
    <molecule id="Q14738-3"/>
    <property type="nucleotide sequence ID" value="NM_180977.3"/>
</dbReference>
<dbReference type="PDB" id="8U1X">
    <property type="method" value="EM"/>
    <property type="resolution" value="2.70 A"/>
    <property type="chains" value="B=1-602"/>
</dbReference>
<dbReference type="PDB" id="8U89">
    <property type="method" value="EM"/>
    <property type="resolution" value="3.30 A"/>
    <property type="chains" value="B=1-602"/>
</dbReference>
<dbReference type="PDBsum" id="8U1X"/>
<dbReference type="PDBsum" id="8U89"/>
<dbReference type="EMDB" id="EMD-41837"/>
<dbReference type="EMDB" id="EMD-42018"/>
<dbReference type="SASBDB" id="Q14738"/>
<dbReference type="SMR" id="Q14738"/>
<dbReference type="BioGRID" id="111520">
    <property type="interactions" value="182"/>
</dbReference>
<dbReference type="DIP" id="DIP-29961N"/>
<dbReference type="ELM" id="Q14738"/>
<dbReference type="FunCoup" id="Q14738">
    <property type="interactions" value="4018"/>
</dbReference>
<dbReference type="IntAct" id="Q14738">
    <property type="interactions" value="96"/>
</dbReference>
<dbReference type="MINT" id="Q14738"/>
<dbReference type="STRING" id="9606.ENSP00000417963"/>
<dbReference type="GlyGen" id="Q14738">
    <property type="glycosylation" value="1 site, 1 O-linked glycan (1 site)"/>
</dbReference>
<dbReference type="iPTMnet" id="Q14738"/>
<dbReference type="MetOSite" id="Q14738"/>
<dbReference type="PhosphoSitePlus" id="Q14738"/>
<dbReference type="BioMuta" id="PPP2R5D"/>
<dbReference type="DMDM" id="7387495"/>
<dbReference type="jPOST" id="Q14738"/>
<dbReference type="MassIVE" id="Q14738"/>
<dbReference type="PaxDb" id="9606-ENSP00000417963"/>
<dbReference type="PeptideAtlas" id="Q14738"/>
<dbReference type="ProteomicsDB" id="60149"/>
<dbReference type="ProteomicsDB" id="60150">
    <molecule id="Q14738-2"/>
</dbReference>
<dbReference type="ProteomicsDB" id="60151">
    <molecule id="Q14738-3"/>
</dbReference>
<dbReference type="Pumba" id="Q14738"/>
<dbReference type="Antibodypedia" id="30209">
    <property type="antibodies" value="381 antibodies from 39 providers"/>
</dbReference>
<dbReference type="DNASU" id="5528"/>
<dbReference type="YCharOS" id="Q14738">
    <property type="antibodies" value="Tested 7 antibodies from 5 manufacturers"/>
</dbReference>
<dbReference type="Ensembl" id="ENST00000394110.7">
    <molecule id="Q14738-2"/>
    <property type="protein sequence ID" value="ENSP00000377669.3"/>
    <property type="gene ID" value="ENSG00000112640.16"/>
</dbReference>
<dbReference type="Ensembl" id="ENST00000461010.5">
    <molecule id="Q14738-3"/>
    <property type="protein sequence ID" value="ENSP00000420674.1"/>
    <property type="gene ID" value="ENSG00000112640.16"/>
</dbReference>
<dbReference type="Ensembl" id="ENST00000485511.6">
    <molecule id="Q14738-1"/>
    <property type="protein sequence ID" value="ENSP00000417963.1"/>
    <property type="gene ID" value="ENSG00000112640.16"/>
</dbReference>
<dbReference type="GeneID" id="5528"/>
<dbReference type="KEGG" id="hsa:5528"/>
<dbReference type="MANE-Select" id="ENST00000485511.6">
    <property type="protein sequence ID" value="ENSP00000417963.1"/>
    <property type="RefSeq nucleotide sequence ID" value="NM_006245.4"/>
    <property type="RefSeq protein sequence ID" value="NP_006236.1"/>
</dbReference>
<dbReference type="UCSC" id="uc003oth.5">
    <molecule id="Q14738-1"/>
    <property type="organism name" value="human"/>
</dbReference>
<dbReference type="AGR" id="HGNC:9312"/>
<dbReference type="CTD" id="5528"/>
<dbReference type="DisGeNET" id="5528"/>
<dbReference type="GeneCards" id="PPP2R5D"/>
<dbReference type="GeneReviews" id="PPP2R5D"/>
<dbReference type="HGNC" id="HGNC:9312">
    <property type="gene designation" value="PPP2R5D"/>
</dbReference>
<dbReference type="HPA" id="ENSG00000112640">
    <property type="expression patterns" value="Low tissue specificity"/>
</dbReference>
<dbReference type="MalaCards" id="PPP2R5D"/>
<dbReference type="MIM" id="601646">
    <property type="type" value="gene"/>
</dbReference>
<dbReference type="MIM" id="616355">
    <property type="type" value="phenotype"/>
</dbReference>
<dbReference type="neXtProt" id="NX_Q14738"/>
<dbReference type="OpenTargets" id="ENSG00000112640"/>
<dbReference type="Orphanet" id="457279">
    <property type="disease" value="Intellectual disability-macrocephaly-hypotonia-behavioral abnormalities syndrome"/>
</dbReference>
<dbReference type="PharmGKB" id="PA33676"/>
<dbReference type="VEuPathDB" id="HostDB:ENSG00000112640"/>
<dbReference type="eggNOG" id="KOG2085">
    <property type="taxonomic scope" value="Eukaryota"/>
</dbReference>
<dbReference type="GeneTree" id="ENSGT01030000234620"/>
<dbReference type="HOGENOM" id="CLU_012437_3_1_1"/>
<dbReference type="InParanoid" id="Q14738"/>
<dbReference type="OMA" id="ECSHEYT"/>
<dbReference type="OrthoDB" id="10264446at2759"/>
<dbReference type="PAN-GO" id="Q14738">
    <property type="GO annotations" value="5 GO annotations based on evolutionary models"/>
</dbReference>
<dbReference type="PhylomeDB" id="Q14738"/>
<dbReference type="TreeFam" id="TF105556"/>
<dbReference type="PathwayCommons" id="Q14738"/>
<dbReference type="Reactome" id="R-HSA-141444">
    <property type="pathway name" value="Amplification of signal from unattached kinetochores via a MAD2 inhibitory signal"/>
</dbReference>
<dbReference type="Reactome" id="R-HSA-163685">
    <property type="pathway name" value="Integration of energy metabolism"/>
</dbReference>
<dbReference type="Reactome" id="R-HSA-163767">
    <property type="pathway name" value="PP2A-mediated dephosphorylation of key metabolic factors"/>
</dbReference>
<dbReference type="Reactome" id="R-HSA-180024">
    <property type="pathway name" value="DARPP-32 events"/>
</dbReference>
<dbReference type="Reactome" id="R-HSA-195253">
    <property type="pathway name" value="Degradation of beta-catenin by the destruction complex"/>
</dbReference>
<dbReference type="Reactome" id="R-HSA-196299">
    <property type="pathway name" value="Beta-catenin phosphorylation cascade"/>
</dbReference>
<dbReference type="Reactome" id="R-HSA-198753">
    <property type="pathway name" value="ERK/MAPK targets"/>
</dbReference>
<dbReference type="Reactome" id="R-HSA-202670">
    <property type="pathway name" value="ERKs are inactivated"/>
</dbReference>
<dbReference type="Reactome" id="R-HSA-2467813">
    <property type="pathway name" value="Separation of Sister Chromatids"/>
</dbReference>
<dbReference type="Reactome" id="R-HSA-2500257">
    <property type="pathway name" value="Resolution of Sister Chromatid Cohesion"/>
</dbReference>
<dbReference type="Reactome" id="R-HSA-389356">
    <property type="pathway name" value="Co-stimulation by CD28"/>
</dbReference>
<dbReference type="Reactome" id="R-HSA-389513">
    <property type="pathway name" value="Co-inhibition by CTLA4"/>
</dbReference>
<dbReference type="Reactome" id="R-HSA-432142">
    <property type="pathway name" value="Platelet sensitization by LDL"/>
</dbReference>
<dbReference type="Reactome" id="R-HSA-4641262">
    <property type="pathway name" value="Disassembly of the destruction complex and recruitment of AXIN to the membrane"/>
</dbReference>
<dbReference type="Reactome" id="R-HSA-5339716">
    <property type="pathway name" value="Signaling by GSK3beta mutants"/>
</dbReference>
<dbReference type="Reactome" id="R-HSA-5358747">
    <property type="pathway name" value="CTNNB1 S33 mutants aren't phosphorylated"/>
</dbReference>
<dbReference type="Reactome" id="R-HSA-5358749">
    <property type="pathway name" value="CTNNB1 S37 mutants aren't phosphorylated"/>
</dbReference>
<dbReference type="Reactome" id="R-HSA-5358751">
    <property type="pathway name" value="CTNNB1 S45 mutants aren't phosphorylated"/>
</dbReference>
<dbReference type="Reactome" id="R-HSA-5358752">
    <property type="pathway name" value="CTNNB1 T41 mutants aren't phosphorylated"/>
</dbReference>
<dbReference type="Reactome" id="R-HSA-5467337">
    <property type="pathway name" value="APC truncation mutants have impaired AXIN binding"/>
</dbReference>
<dbReference type="Reactome" id="R-HSA-5467340">
    <property type="pathway name" value="AXIN missense mutants destabilize the destruction complex"/>
</dbReference>
<dbReference type="Reactome" id="R-HSA-5467348">
    <property type="pathway name" value="Truncations of AMER1 destabilize the destruction complex"/>
</dbReference>
<dbReference type="Reactome" id="R-HSA-5663220">
    <property type="pathway name" value="RHO GTPases Activate Formins"/>
</dbReference>
<dbReference type="Reactome" id="R-HSA-5673000">
    <property type="pathway name" value="RAF activation"/>
</dbReference>
<dbReference type="Reactome" id="R-HSA-5675221">
    <property type="pathway name" value="Negative regulation of MAPK pathway"/>
</dbReference>
<dbReference type="Reactome" id="R-HSA-6811558">
    <property type="pathway name" value="PI5P, PP2A and IER3 Regulate PI3K/AKT Signaling"/>
</dbReference>
<dbReference type="Reactome" id="R-HSA-68877">
    <property type="pathway name" value="Mitotic Prometaphase"/>
</dbReference>
<dbReference type="Reactome" id="R-HSA-9634600">
    <property type="pathway name" value="Regulation of glycolysis by fructose 2,6-bisphosphate metabolism"/>
</dbReference>
<dbReference type="Reactome" id="R-HSA-9648025">
    <property type="pathway name" value="EML4 and NUDC in mitotic spindle formation"/>
</dbReference>
<dbReference type="SignaLink" id="Q14738"/>
<dbReference type="SIGNOR" id="Q14738"/>
<dbReference type="BioGRID-ORCS" id="5528">
    <property type="hits" value="20 hits in 1159 CRISPR screens"/>
</dbReference>
<dbReference type="CD-CODE" id="FB4E32DD">
    <property type="entry name" value="Presynaptic clusters and postsynaptic densities"/>
</dbReference>
<dbReference type="ChiTaRS" id="PPP2R5D">
    <property type="organism name" value="human"/>
</dbReference>
<dbReference type="GeneWiki" id="PPP2R5D"/>
<dbReference type="GenomeRNAi" id="5528"/>
<dbReference type="Pharos" id="Q14738">
    <property type="development level" value="Tbio"/>
</dbReference>
<dbReference type="PRO" id="PR:Q14738"/>
<dbReference type="Proteomes" id="UP000005640">
    <property type="component" value="Chromosome 6"/>
</dbReference>
<dbReference type="RNAct" id="Q14738">
    <property type="molecule type" value="protein"/>
</dbReference>
<dbReference type="Bgee" id="ENSG00000112640">
    <property type="expression patterns" value="Expressed in ganglionic eminence and 209 other cell types or tissues"/>
</dbReference>
<dbReference type="ExpressionAtlas" id="Q14738">
    <property type="expression patterns" value="baseline and differential"/>
</dbReference>
<dbReference type="GO" id="GO:0005829">
    <property type="term" value="C:cytosol"/>
    <property type="evidence" value="ECO:0000314"/>
    <property type="project" value="HPA"/>
</dbReference>
<dbReference type="GO" id="GO:0005654">
    <property type="term" value="C:nucleoplasm"/>
    <property type="evidence" value="ECO:0000304"/>
    <property type="project" value="Reactome"/>
</dbReference>
<dbReference type="GO" id="GO:0005634">
    <property type="term" value="C:nucleus"/>
    <property type="evidence" value="ECO:0000318"/>
    <property type="project" value="GO_Central"/>
</dbReference>
<dbReference type="GO" id="GO:0000159">
    <property type="term" value="C:protein phosphatase type 2A complex"/>
    <property type="evidence" value="ECO:0000318"/>
    <property type="project" value="GO_Central"/>
</dbReference>
<dbReference type="GO" id="GO:0072542">
    <property type="term" value="F:protein phosphatase activator activity"/>
    <property type="evidence" value="ECO:0000318"/>
    <property type="project" value="GO_Central"/>
</dbReference>
<dbReference type="GO" id="GO:0019888">
    <property type="term" value="F:protein phosphatase regulator activity"/>
    <property type="evidence" value="ECO:0000314"/>
    <property type="project" value="UniProtKB"/>
</dbReference>
<dbReference type="GO" id="GO:0051177">
    <property type="term" value="P:meiotic sister chromatid cohesion"/>
    <property type="evidence" value="ECO:0000318"/>
    <property type="project" value="GO_Central"/>
</dbReference>
<dbReference type="GO" id="GO:0007399">
    <property type="term" value="P:nervous system development"/>
    <property type="evidence" value="ECO:0000304"/>
    <property type="project" value="ProtInc"/>
</dbReference>
<dbReference type="GO" id="GO:0007165">
    <property type="term" value="P:signal transduction"/>
    <property type="evidence" value="ECO:0007669"/>
    <property type="project" value="InterPro"/>
</dbReference>
<dbReference type="FunFam" id="1.25.10.10:FF:000003">
    <property type="entry name" value="Serine/threonine-protein phosphatase 2A 56 kDa regulatory subunit"/>
    <property type="match status" value="1"/>
</dbReference>
<dbReference type="Gene3D" id="1.25.10.10">
    <property type="entry name" value="Leucine-rich Repeat Variant"/>
    <property type="match status" value="1"/>
</dbReference>
<dbReference type="InterPro" id="IPR011989">
    <property type="entry name" value="ARM-like"/>
</dbReference>
<dbReference type="InterPro" id="IPR016024">
    <property type="entry name" value="ARM-type_fold"/>
</dbReference>
<dbReference type="InterPro" id="IPR002554">
    <property type="entry name" value="PP2A_B56"/>
</dbReference>
<dbReference type="PANTHER" id="PTHR10257">
    <property type="entry name" value="SERINE/THREONINE PROTEIN PHOSPHATASE 2A PP2A REGULATORY SUBUNIT B"/>
    <property type="match status" value="1"/>
</dbReference>
<dbReference type="PANTHER" id="PTHR10257:SF89">
    <property type="entry name" value="SERINE_THREONINE-PROTEIN PHOSPHATASE 2A 56 KDA REGULATORY SUBUNIT DELTA ISOFORM"/>
    <property type="match status" value="1"/>
</dbReference>
<dbReference type="Pfam" id="PF01603">
    <property type="entry name" value="B56"/>
    <property type="match status" value="1"/>
</dbReference>
<dbReference type="PIRSF" id="PIRSF028043">
    <property type="entry name" value="PP2A_B56"/>
    <property type="match status" value="1"/>
</dbReference>
<dbReference type="SUPFAM" id="SSF48371">
    <property type="entry name" value="ARM repeat"/>
    <property type="match status" value="1"/>
</dbReference>
<keyword id="KW-0002">3D-structure</keyword>
<keyword id="KW-0025">Alternative splicing</keyword>
<keyword id="KW-0963">Cytoplasm</keyword>
<keyword id="KW-0903">Direct protein sequencing</keyword>
<keyword id="KW-0225">Disease variant</keyword>
<keyword id="KW-0991">Intellectual disability</keyword>
<keyword id="KW-0539">Nucleus</keyword>
<keyword id="KW-0597">Phosphoprotein</keyword>
<keyword id="KW-1267">Proteomics identification</keyword>
<keyword id="KW-1185">Reference proteome</keyword>
<keyword id="KW-0677">Repeat</keyword>
<accession>Q14738</accession>
<accession>A8K3I9</accession>
<accession>B5BUA6</accession>
<accession>O00494</accession>
<accession>O00696</accession>
<accession>Q15171</accession>
<accession>Q5TC39</accession>
<comment type="function">
    <text>The B regulatory subunit might modulate substrate selectivity and catalytic activity, and might also direct the localization of the catalytic enzyme to a particular subcellular compartment.</text>
</comment>
<comment type="subunit">
    <text evidence="3 4 8">PP2A consists of a common heterodimeric core enzyme, composed of a 36 kDa catalytic subunit (subunit C) and a 65 kDa constant regulatory subunit (PR65 or subunit A), that associates with a variety of regulatory subunits. Proteins that associate with the core dimer include three families of regulatory subunits B (the R2/B/PR55/B55, R3/B''/PR72/PR130/PR59 and R5/B'/B56 families), the 48 kDa variable regulatory subunit, viral proteins, and cell signaling molecules. Interacts with the PP2A A subunit PPP2R1A (PubMed:37761890). Interacts with SGO1 (PubMed:16541025). Interacts with ADCY8 (PubMed:22976297).</text>
</comment>
<comment type="interaction">
    <interactant intactId="EBI-396563">
        <id>Q14738</id>
    </interactant>
    <interactant intactId="EBI-740680">
        <id>Q8WWB3</id>
        <label>DYDC1</label>
    </interactant>
    <organismsDiffer>false</organismsDiffer>
    <experiments>3</experiments>
</comment>
<comment type="interaction">
    <interactant intactId="EBI-396563">
        <id>Q14738</id>
    </interactant>
    <interactant intactId="EBI-5661036">
        <id>A1L4K1</id>
        <label>FSD2</label>
    </interactant>
    <organismsDiffer>false</organismsDiffer>
    <experiments>3</experiments>
</comment>
<comment type="interaction">
    <interactant intactId="EBI-396563">
        <id>Q14738</id>
    </interactant>
    <interactant intactId="EBI-745426">
        <id>Q13136</id>
        <label>PPFIA1</label>
    </interactant>
    <organismsDiffer>false</organismsDiffer>
    <experiments>5</experiments>
</comment>
<comment type="interaction">
    <interactant intactId="EBI-396563">
        <id>Q14738</id>
    </interactant>
    <interactant intactId="EBI-302388">
        <id>P30153</id>
        <label>PPP2R1A</label>
    </interactant>
    <organismsDiffer>false</organismsDiffer>
    <experiments>14</experiments>
</comment>
<comment type="interaction">
    <interactant intactId="EBI-396563">
        <id>Q14738</id>
    </interactant>
    <interactant intactId="EBI-357094">
        <id>P30154</id>
        <label>PPP2R1B</label>
    </interactant>
    <organismsDiffer>false</organismsDiffer>
    <experiments>3</experiments>
</comment>
<comment type="interaction">
    <interactant intactId="EBI-396563">
        <id>Q14738</id>
    </interactant>
    <interactant intactId="EBI-989069">
        <id>Q5FBB7</id>
        <label>SGO1</label>
    </interactant>
    <organismsDiffer>false</organismsDiffer>
    <experiments>4</experiments>
</comment>
<comment type="interaction">
    <interactant intactId="EBI-396563">
        <id>Q14738</id>
    </interactant>
    <interactant intactId="EBI-739895">
        <id>Q8N6Y0</id>
        <label>USHBP1</label>
    </interactant>
    <organismsDiffer>false</organismsDiffer>
    <experiments>3</experiments>
</comment>
<comment type="interaction">
    <interactant intactId="EBI-396563">
        <id>Q14738</id>
    </interactant>
    <interactant intactId="EBI-79859">
        <id>O08785</id>
        <label>Clock</label>
    </interactant>
    <organismsDiffer>true</organismsDiffer>
    <experiments>2</experiments>
</comment>
<comment type="subcellular location">
    <subcellularLocation>
        <location>Cytoplasm</location>
    </subcellularLocation>
    <subcellularLocation>
        <location>Nucleus</location>
    </subcellularLocation>
    <text>Nuclear in interphase, nuclear during mitosis.</text>
</comment>
<comment type="alternative products">
    <event type="alternative splicing"/>
    <isoform>
        <id>Q14738-1</id>
        <name>Delta-1</name>
        <sequence type="displayed"/>
    </isoform>
    <isoform>
        <id>Q14738-2</id>
        <name>Delta-2</name>
        <sequence type="described" ref="VSP_005111"/>
    </isoform>
    <isoform>
        <id>Q14738-3</id>
        <name>Delta-3</name>
        <sequence type="described" ref="VSP_005110"/>
    </isoform>
</comment>
<comment type="tissue specificity">
    <text>Isoform Delta-2 is widely expressed. Isoform Delta-1 is highly expressed in brain.</text>
</comment>
<comment type="induction">
    <text>By retinoic acid; in neuroblastoma cell lines.</text>
</comment>
<comment type="disease" evidence="6 7">
    <disease id="DI-04419">
        <name>Houge-Janssens syndrome 1</name>
        <acronym>HJS1</acronym>
        <description>An autosomal dominant disorder characterized by global developmental delay, hypotonia, variably impaired intellectual development, poor speech, and dysmorphic facial features. Additional more variable features may include macrocephaly and seizures.</description>
        <dbReference type="MIM" id="616355"/>
    </disease>
    <text>The disease is caused by variants affecting the gene represented in this entry.</text>
</comment>
<comment type="similarity">
    <text evidence="13">Belongs to the phosphatase 2A regulatory subunit B56 family.</text>
</comment>
<sequence length="602" mass="69992">MPYKLKKEKEPPKVAKCTAKPSSSGKDGGGENTEEAQPQPQPQPQPQAQSQPPSSNKRPSNSTPPPTQLSKIKYSGGPQIVKKERRQSSSRFNLSKNRELQKLPALKDSPTQEREELFIQKLRQCCVLFDFVSDPLSDLKFKEVKRAGLNEMVEYITHSRDVVTEAIYPEAVTMFSVNLFRTLPPSSNPTGAEFDPEEDEPTLEAAWPHLQLVYEFFLRFLESPDFQPNIAKKYIDQKFVLALLDLFDSEDPRERDFLKTILHRIYGKFLGLRAYIRRQINHIFYRFIYETEHHNGIAELLEILGSIINGFALPLKEEHKMFLIRVLLPLHKVKSLSVYHPQLAYCVVQFLEKESSLTEPVIVGLLKFWPKTHSPKEVMFLNELEEILDVIEPSEFSKVMEPLFRQLAKCVSSPHFQVAERALYYWNNEYIMSLISDNAARVLPIMFPALYRNSKSHWNKTIHGLIYNALKLFMEMNQKLFDDCTQQYKAEKQKGRFRMKEREEMWQKIEELARLNPQYPMFRAPPPLPPVYSMETETPTAEDIQLLKRTVETEAVQMLKDIKKEKVLLRRKSELPQDVYTIKALEAHKRAEEFLTASQEAL</sequence>
<name>2A5D_HUMAN</name>
<feature type="chain" id="PRO_0000071452" description="Serine/threonine-protein phosphatase 2A 56 kDa regulatory subunit delta isoform">
    <location>
        <begin position="1"/>
        <end position="602"/>
    </location>
</feature>
<feature type="repeat" description="1">
    <location>
        <begin position="37"/>
        <end position="38"/>
    </location>
</feature>
<feature type="repeat" description="2">
    <location>
        <begin position="39"/>
        <end position="40"/>
    </location>
</feature>
<feature type="repeat" description="3">
    <location>
        <begin position="41"/>
        <end position="42"/>
    </location>
</feature>
<feature type="repeat" description="4">
    <location>
        <begin position="43"/>
        <end position="44"/>
    </location>
</feature>
<feature type="repeat" description="5">
    <location>
        <begin position="45"/>
        <end position="46"/>
    </location>
</feature>
<feature type="repeat" description="6; approximate">
    <location>
        <begin position="47"/>
        <end position="48"/>
    </location>
</feature>
<feature type="repeat" description="7; approximate">
    <location>
        <begin position="49"/>
        <end position="50"/>
    </location>
</feature>
<feature type="repeat" description="8">
    <location>
        <begin position="51"/>
        <end position="52"/>
    </location>
</feature>
<feature type="region of interest" description="Disordered" evidence="2">
    <location>
        <begin position="1"/>
        <end position="96"/>
    </location>
</feature>
<feature type="region of interest" description="8 X 2 AA approximate tandem repeats of Q-P">
    <location>
        <begin position="37"/>
        <end position="52"/>
    </location>
</feature>
<feature type="short sequence motif" description="SH3-binding; class I" evidence="1">
    <location>
        <begin position="523"/>
        <end position="530"/>
    </location>
</feature>
<feature type="short sequence motif" description="Nuclear localization signal" evidence="1">
    <location>
        <begin position="548"/>
        <end position="565"/>
    </location>
</feature>
<feature type="compositionally biased region" description="Basic and acidic residues" evidence="2">
    <location>
        <begin position="1"/>
        <end position="13"/>
    </location>
</feature>
<feature type="compositionally biased region" description="Low complexity" evidence="2">
    <location>
        <begin position="46"/>
        <end position="55"/>
    </location>
</feature>
<feature type="modified residue" description="Phosphothreonine" evidence="17">
    <location>
        <position position="63"/>
    </location>
</feature>
<feature type="modified residue" description="Phosphoserine" evidence="17">
    <location>
        <position position="88"/>
    </location>
</feature>
<feature type="modified residue" description="Phosphoserine" evidence="17">
    <location>
        <position position="89"/>
    </location>
</feature>
<feature type="modified residue" description="Phosphoserine" evidence="17">
    <location>
        <position position="90"/>
    </location>
</feature>
<feature type="modified residue" description="Phosphoserine" evidence="15 16 17">
    <location>
        <position position="573"/>
    </location>
</feature>
<feature type="modified residue" description="Phosphoserine" evidence="14">
    <location>
        <position position="598"/>
    </location>
</feature>
<feature type="splice variant" id="VSP_005110" description="In isoform Delta-3." evidence="12">
    <location>
        <begin position="11"/>
        <end position="116"/>
    </location>
</feature>
<feature type="splice variant" id="VSP_005111" description="In isoform Delta-2." evidence="9 10 11">
    <location>
        <begin position="85"/>
        <end position="116"/>
    </location>
</feature>
<feature type="sequence variant" id="VAR_069414" description="Found in a patient with delayed psychomotor development, no speech and cataracts; no effect on binding to subunit PPP2CA; no effect on binding to subunit PPP2R1A; dbSNP:rs757369209." evidence="5 7">
    <original>P</original>
    <variation>S</variation>
    <location>
        <position position="53"/>
    </location>
</feature>
<feature type="sequence variant" id="VAR_073708" description="In HJS1; decreases binding to subunit PPP2CA; decreases binding to subunit PPP2R1A; dbSNP:rs863225082." evidence="6 7">
    <original>E</original>
    <variation>K</variation>
    <location>
        <position position="198"/>
    </location>
</feature>
<feature type="sequence variant" id="VAR_074491" description="In HJS1; decreases binding to subunit PPP2CA; decreases binding to subunit PPP2R1A; dbSNP:rs863225079." evidence="7">
    <original>E</original>
    <variation>K</variation>
    <location>
        <position position="200"/>
    </location>
</feature>
<feature type="sequence variant" id="VAR_073709" description="In HJS1; decreases binding to subunit PPP2CA; decreases binding to subunit PPP2R1A; dbSNP:rs876657383." evidence="6 7">
    <original>P</original>
    <variation>R</variation>
    <location>
        <position position="201"/>
    </location>
</feature>
<feature type="sequence variant" id="VAR_074492" description="In HJS1; decreases binding to subunit PPP2CA; decreases binding to subunit PPP2R1A; dbSNP:rs869320691." evidence="7">
    <original>W</original>
    <variation>R</variation>
    <location>
        <position position="207"/>
    </location>
</feature>
<proteinExistence type="evidence at protein level"/>
<organism>
    <name type="scientific">Homo sapiens</name>
    <name type="common">Human</name>
    <dbReference type="NCBI Taxonomy" id="9606"/>
    <lineage>
        <taxon>Eukaryota</taxon>
        <taxon>Metazoa</taxon>
        <taxon>Chordata</taxon>
        <taxon>Craniata</taxon>
        <taxon>Vertebrata</taxon>
        <taxon>Euteleostomi</taxon>
        <taxon>Mammalia</taxon>
        <taxon>Eutheria</taxon>
        <taxon>Euarchontoglires</taxon>
        <taxon>Primates</taxon>
        <taxon>Haplorrhini</taxon>
        <taxon>Catarrhini</taxon>
        <taxon>Hominidae</taxon>
        <taxon>Homo</taxon>
    </lineage>
</organism>
<reference key="1">
    <citation type="journal article" date="1996" name="J. Biol. Chem.">
        <title>The B56 family of protein phosphatase 2A (PP2A) regulatory subunits encodes differentiation-induced phosphoproteins that target PP2A to both nucleus and cytoplasm.</title>
        <authorList>
            <person name="McCright B."/>
            <person name="Rivers A.M."/>
            <person name="Audlin S."/>
            <person name="Virshup D.M."/>
        </authorList>
    </citation>
    <scope>NUCLEOTIDE SEQUENCE [MRNA] (ISOFORM DELTA-1)</scope>
    <source>
        <tissue>Fetal brain</tissue>
    </source>
</reference>
<reference key="2">
    <citation type="journal article" date="1997" name="FEBS Lett.">
        <title>Molecular heterogeneity of the cDNA encoding a 74-kDa regulatory subunit (B'' or delta) of human protein phosphatase 2A.</title>
        <authorList>
            <person name="Tanabe O."/>
            <person name="Gomez G.A."/>
            <person name="Nishito Y."/>
            <person name="Usui H."/>
            <person name="Takeda M."/>
        </authorList>
    </citation>
    <scope>NUCLEOTIDE SEQUENCE [MRNA] (ISOFORMS DELTA-1 AND DELTA-3)</scope>
    <source>
        <tissue>Brain cortex</tissue>
    </source>
</reference>
<reference key="3">
    <citation type="journal article" date="1996" name="FEBS Lett.">
        <title>Molecular cloning of a 74-kDa regulatory subunit (B'' or delta) of human protein phosphatase 2A.</title>
        <authorList>
            <person name="Tanabe O."/>
            <person name="Nagase T."/>
            <person name="Murakami T."/>
            <person name="Nozaki H."/>
            <person name="Usui H."/>
            <person name="Nishito Y."/>
            <person name="Hayashi H."/>
            <person name="Kagamiyama H."/>
            <person name="Takeda M."/>
        </authorList>
    </citation>
    <scope>NUCLEOTIDE SEQUENCE [MRNA] (ISOFORM DELTA-2)</scope>
    <scope>PROTEIN SEQUENCE OF 501-508; 550-559; 573-580 AND 584-601 (DELTA-1)</scope>
    <source>
        <tissue>Bone marrow</tissue>
        <tissue>Brain cortex</tissue>
    </source>
</reference>
<reference key="4">
    <citation type="journal article" date="2004" name="Nat. Genet.">
        <title>Complete sequencing and characterization of 21,243 full-length human cDNAs.</title>
        <authorList>
            <person name="Ota T."/>
            <person name="Suzuki Y."/>
            <person name="Nishikawa T."/>
            <person name="Otsuki T."/>
            <person name="Sugiyama T."/>
            <person name="Irie R."/>
            <person name="Wakamatsu A."/>
            <person name="Hayashi K."/>
            <person name="Sato H."/>
            <person name="Nagai K."/>
            <person name="Kimura K."/>
            <person name="Makita H."/>
            <person name="Sekine M."/>
            <person name="Obayashi M."/>
            <person name="Nishi T."/>
            <person name="Shibahara T."/>
            <person name="Tanaka T."/>
            <person name="Ishii S."/>
            <person name="Yamamoto J."/>
            <person name="Saito K."/>
            <person name="Kawai Y."/>
            <person name="Isono Y."/>
            <person name="Nakamura Y."/>
            <person name="Nagahari K."/>
            <person name="Murakami K."/>
            <person name="Yasuda T."/>
            <person name="Iwayanagi T."/>
            <person name="Wagatsuma M."/>
            <person name="Shiratori A."/>
            <person name="Sudo H."/>
            <person name="Hosoiri T."/>
            <person name="Kaku Y."/>
            <person name="Kodaira H."/>
            <person name="Kondo H."/>
            <person name="Sugawara M."/>
            <person name="Takahashi M."/>
            <person name="Kanda K."/>
            <person name="Yokoi T."/>
            <person name="Furuya T."/>
            <person name="Kikkawa E."/>
            <person name="Omura Y."/>
            <person name="Abe K."/>
            <person name="Kamihara K."/>
            <person name="Katsuta N."/>
            <person name="Sato K."/>
            <person name="Tanikawa M."/>
            <person name="Yamazaki M."/>
            <person name="Ninomiya K."/>
            <person name="Ishibashi T."/>
            <person name="Yamashita H."/>
            <person name="Murakawa K."/>
            <person name="Fujimori K."/>
            <person name="Tanai H."/>
            <person name="Kimata M."/>
            <person name="Watanabe M."/>
            <person name="Hiraoka S."/>
            <person name="Chiba Y."/>
            <person name="Ishida S."/>
            <person name="Ono Y."/>
            <person name="Takiguchi S."/>
            <person name="Watanabe S."/>
            <person name="Yosida M."/>
            <person name="Hotuta T."/>
            <person name="Kusano J."/>
            <person name="Kanehori K."/>
            <person name="Takahashi-Fujii A."/>
            <person name="Hara H."/>
            <person name="Tanase T.-O."/>
            <person name="Nomura Y."/>
            <person name="Togiya S."/>
            <person name="Komai F."/>
            <person name="Hara R."/>
            <person name="Takeuchi K."/>
            <person name="Arita M."/>
            <person name="Imose N."/>
            <person name="Musashino K."/>
            <person name="Yuuki H."/>
            <person name="Oshima A."/>
            <person name="Sasaki N."/>
            <person name="Aotsuka S."/>
            <person name="Yoshikawa Y."/>
            <person name="Matsunawa H."/>
            <person name="Ichihara T."/>
            <person name="Shiohata N."/>
            <person name="Sano S."/>
            <person name="Moriya S."/>
            <person name="Momiyama H."/>
            <person name="Satoh N."/>
            <person name="Takami S."/>
            <person name="Terashima Y."/>
            <person name="Suzuki O."/>
            <person name="Nakagawa S."/>
            <person name="Senoh A."/>
            <person name="Mizoguchi H."/>
            <person name="Goto Y."/>
            <person name="Shimizu F."/>
            <person name="Wakebe H."/>
            <person name="Hishigaki H."/>
            <person name="Watanabe T."/>
            <person name="Sugiyama A."/>
            <person name="Takemoto M."/>
            <person name="Kawakami B."/>
            <person name="Yamazaki M."/>
            <person name="Watanabe K."/>
            <person name="Kumagai A."/>
            <person name="Itakura S."/>
            <person name="Fukuzumi Y."/>
            <person name="Fujimori Y."/>
            <person name="Komiyama M."/>
            <person name="Tashiro H."/>
            <person name="Tanigami A."/>
            <person name="Fujiwara T."/>
            <person name="Ono T."/>
            <person name="Yamada K."/>
            <person name="Fujii Y."/>
            <person name="Ozaki K."/>
            <person name="Hirao M."/>
            <person name="Ohmori Y."/>
            <person name="Kawabata A."/>
            <person name="Hikiji T."/>
            <person name="Kobatake N."/>
            <person name="Inagaki H."/>
            <person name="Ikema Y."/>
            <person name="Okamoto S."/>
            <person name="Okitani R."/>
            <person name="Kawakami T."/>
            <person name="Noguchi S."/>
            <person name="Itoh T."/>
            <person name="Shigeta K."/>
            <person name="Senba T."/>
            <person name="Matsumura K."/>
            <person name="Nakajima Y."/>
            <person name="Mizuno T."/>
            <person name="Morinaga M."/>
            <person name="Sasaki M."/>
            <person name="Togashi T."/>
            <person name="Oyama M."/>
            <person name="Hata H."/>
            <person name="Watanabe M."/>
            <person name="Komatsu T."/>
            <person name="Mizushima-Sugano J."/>
            <person name="Satoh T."/>
            <person name="Shirai Y."/>
            <person name="Takahashi Y."/>
            <person name="Nakagawa K."/>
            <person name="Okumura K."/>
            <person name="Nagase T."/>
            <person name="Nomura N."/>
            <person name="Kikuchi H."/>
            <person name="Masuho Y."/>
            <person name="Yamashita R."/>
            <person name="Nakai K."/>
            <person name="Yada T."/>
            <person name="Nakamura Y."/>
            <person name="Ohara O."/>
            <person name="Isogai T."/>
            <person name="Sugano S."/>
        </authorList>
    </citation>
    <scope>NUCLEOTIDE SEQUENCE [LARGE SCALE MRNA] (ISOFORM DELTA-2)</scope>
    <source>
        <tissue>Heart</tissue>
    </source>
</reference>
<reference key="5">
    <citation type="journal article" date="2008" name="Nat. Methods">
        <title>Human protein factory for converting the transcriptome into an in vitro-expressed proteome.</title>
        <authorList>
            <person name="Goshima N."/>
            <person name="Kawamura Y."/>
            <person name="Fukumoto A."/>
            <person name="Miura A."/>
            <person name="Honma R."/>
            <person name="Satoh R."/>
            <person name="Wakamatsu A."/>
            <person name="Yamamoto J."/>
            <person name="Kimura K."/>
            <person name="Nishikawa T."/>
            <person name="Andoh T."/>
            <person name="Iida Y."/>
            <person name="Ishikawa K."/>
            <person name="Ito E."/>
            <person name="Kagawa N."/>
            <person name="Kaminaga C."/>
            <person name="Kanehori K."/>
            <person name="Kawakami B."/>
            <person name="Kenmochi K."/>
            <person name="Kimura R."/>
            <person name="Kobayashi M."/>
            <person name="Kuroita T."/>
            <person name="Kuwayama H."/>
            <person name="Maruyama Y."/>
            <person name="Matsuo K."/>
            <person name="Minami K."/>
            <person name="Mitsubori M."/>
            <person name="Mori M."/>
            <person name="Morishita R."/>
            <person name="Murase A."/>
            <person name="Nishikawa A."/>
            <person name="Nishikawa S."/>
            <person name="Okamoto T."/>
            <person name="Sakagami N."/>
            <person name="Sakamoto Y."/>
            <person name="Sasaki Y."/>
            <person name="Seki T."/>
            <person name="Sono S."/>
            <person name="Sugiyama A."/>
            <person name="Sumiya T."/>
            <person name="Takayama T."/>
            <person name="Takayama Y."/>
            <person name="Takeda H."/>
            <person name="Togashi T."/>
            <person name="Yahata K."/>
            <person name="Yamada H."/>
            <person name="Yanagisawa Y."/>
            <person name="Endo Y."/>
            <person name="Imamoto F."/>
            <person name="Kisu Y."/>
            <person name="Tanaka S."/>
            <person name="Isogai T."/>
            <person name="Imai J."/>
            <person name="Watanabe S."/>
            <person name="Nomura N."/>
        </authorList>
    </citation>
    <scope>NUCLEOTIDE SEQUENCE [LARGE SCALE MRNA] (ISOFORM DELTA-1)</scope>
</reference>
<reference key="6">
    <citation type="journal article" date="2003" name="Nature">
        <title>The DNA sequence and analysis of human chromosome 6.</title>
        <authorList>
            <person name="Mungall A.J."/>
            <person name="Palmer S.A."/>
            <person name="Sims S.K."/>
            <person name="Edwards C.A."/>
            <person name="Ashurst J.L."/>
            <person name="Wilming L."/>
            <person name="Jones M.C."/>
            <person name="Horton R."/>
            <person name="Hunt S.E."/>
            <person name="Scott C.E."/>
            <person name="Gilbert J.G.R."/>
            <person name="Clamp M.E."/>
            <person name="Bethel G."/>
            <person name="Milne S."/>
            <person name="Ainscough R."/>
            <person name="Almeida J.P."/>
            <person name="Ambrose K.D."/>
            <person name="Andrews T.D."/>
            <person name="Ashwell R.I.S."/>
            <person name="Babbage A.K."/>
            <person name="Bagguley C.L."/>
            <person name="Bailey J."/>
            <person name="Banerjee R."/>
            <person name="Barker D.J."/>
            <person name="Barlow K.F."/>
            <person name="Bates K."/>
            <person name="Beare D.M."/>
            <person name="Beasley H."/>
            <person name="Beasley O."/>
            <person name="Bird C.P."/>
            <person name="Blakey S.E."/>
            <person name="Bray-Allen S."/>
            <person name="Brook J."/>
            <person name="Brown A.J."/>
            <person name="Brown J.Y."/>
            <person name="Burford D.C."/>
            <person name="Burrill W."/>
            <person name="Burton J."/>
            <person name="Carder C."/>
            <person name="Carter N.P."/>
            <person name="Chapman J.C."/>
            <person name="Clark S.Y."/>
            <person name="Clark G."/>
            <person name="Clee C.M."/>
            <person name="Clegg S."/>
            <person name="Cobley V."/>
            <person name="Collier R.E."/>
            <person name="Collins J.E."/>
            <person name="Colman L.K."/>
            <person name="Corby N.R."/>
            <person name="Coville G.J."/>
            <person name="Culley K.M."/>
            <person name="Dhami P."/>
            <person name="Davies J."/>
            <person name="Dunn M."/>
            <person name="Earthrowl M.E."/>
            <person name="Ellington A.E."/>
            <person name="Evans K.A."/>
            <person name="Faulkner L."/>
            <person name="Francis M.D."/>
            <person name="Frankish A."/>
            <person name="Frankland J."/>
            <person name="French L."/>
            <person name="Garner P."/>
            <person name="Garnett J."/>
            <person name="Ghori M.J."/>
            <person name="Gilby L.M."/>
            <person name="Gillson C.J."/>
            <person name="Glithero R.J."/>
            <person name="Grafham D.V."/>
            <person name="Grant M."/>
            <person name="Gribble S."/>
            <person name="Griffiths C."/>
            <person name="Griffiths M.N.D."/>
            <person name="Hall R."/>
            <person name="Halls K.S."/>
            <person name="Hammond S."/>
            <person name="Harley J.L."/>
            <person name="Hart E.A."/>
            <person name="Heath P.D."/>
            <person name="Heathcott R."/>
            <person name="Holmes S.J."/>
            <person name="Howden P.J."/>
            <person name="Howe K.L."/>
            <person name="Howell G.R."/>
            <person name="Huckle E."/>
            <person name="Humphray S.J."/>
            <person name="Humphries M.D."/>
            <person name="Hunt A.R."/>
            <person name="Johnson C.M."/>
            <person name="Joy A.A."/>
            <person name="Kay M."/>
            <person name="Keenan S.J."/>
            <person name="Kimberley A.M."/>
            <person name="King A."/>
            <person name="Laird G.K."/>
            <person name="Langford C."/>
            <person name="Lawlor S."/>
            <person name="Leongamornlert D.A."/>
            <person name="Leversha M."/>
            <person name="Lloyd C.R."/>
            <person name="Lloyd D.M."/>
            <person name="Loveland J.E."/>
            <person name="Lovell J."/>
            <person name="Martin S."/>
            <person name="Mashreghi-Mohammadi M."/>
            <person name="Maslen G.L."/>
            <person name="Matthews L."/>
            <person name="McCann O.T."/>
            <person name="McLaren S.J."/>
            <person name="McLay K."/>
            <person name="McMurray A."/>
            <person name="Moore M.J.F."/>
            <person name="Mullikin J.C."/>
            <person name="Niblett D."/>
            <person name="Nickerson T."/>
            <person name="Novik K.L."/>
            <person name="Oliver K."/>
            <person name="Overton-Larty E.K."/>
            <person name="Parker A."/>
            <person name="Patel R."/>
            <person name="Pearce A.V."/>
            <person name="Peck A.I."/>
            <person name="Phillimore B.J.C.T."/>
            <person name="Phillips S."/>
            <person name="Plumb R.W."/>
            <person name="Porter K.M."/>
            <person name="Ramsey Y."/>
            <person name="Ranby S.A."/>
            <person name="Rice C.M."/>
            <person name="Ross M.T."/>
            <person name="Searle S.M."/>
            <person name="Sehra H.K."/>
            <person name="Sheridan E."/>
            <person name="Skuce C.D."/>
            <person name="Smith S."/>
            <person name="Smith M."/>
            <person name="Spraggon L."/>
            <person name="Squares S.L."/>
            <person name="Steward C.A."/>
            <person name="Sycamore N."/>
            <person name="Tamlyn-Hall G."/>
            <person name="Tester J."/>
            <person name="Theaker A.J."/>
            <person name="Thomas D.W."/>
            <person name="Thorpe A."/>
            <person name="Tracey A."/>
            <person name="Tromans A."/>
            <person name="Tubby B."/>
            <person name="Wall M."/>
            <person name="Wallis J.M."/>
            <person name="West A.P."/>
            <person name="White S.S."/>
            <person name="Whitehead S.L."/>
            <person name="Whittaker H."/>
            <person name="Wild A."/>
            <person name="Willey D.J."/>
            <person name="Wilmer T.E."/>
            <person name="Wood J.M."/>
            <person name="Wray P.W."/>
            <person name="Wyatt J.C."/>
            <person name="Young L."/>
            <person name="Younger R.M."/>
            <person name="Bentley D.R."/>
            <person name="Coulson A."/>
            <person name="Durbin R.M."/>
            <person name="Hubbard T."/>
            <person name="Sulston J.E."/>
            <person name="Dunham I."/>
            <person name="Rogers J."/>
            <person name="Beck S."/>
        </authorList>
    </citation>
    <scope>NUCLEOTIDE SEQUENCE [LARGE SCALE GENOMIC DNA]</scope>
</reference>
<reference key="7">
    <citation type="submission" date="2005-07" db="EMBL/GenBank/DDBJ databases">
        <authorList>
            <person name="Mural R.J."/>
            <person name="Istrail S."/>
            <person name="Sutton G.G."/>
            <person name="Florea L."/>
            <person name="Halpern A.L."/>
            <person name="Mobarry C.M."/>
            <person name="Lippert R."/>
            <person name="Walenz B."/>
            <person name="Shatkay H."/>
            <person name="Dew I."/>
            <person name="Miller J.R."/>
            <person name="Flanigan M.J."/>
            <person name="Edwards N.J."/>
            <person name="Bolanos R."/>
            <person name="Fasulo D."/>
            <person name="Halldorsson B.V."/>
            <person name="Hannenhalli S."/>
            <person name="Turner R."/>
            <person name="Yooseph S."/>
            <person name="Lu F."/>
            <person name="Nusskern D.R."/>
            <person name="Shue B.C."/>
            <person name="Zheng X.H."/>
            <person name="Zhong F."/>
            <person name="Delcher A.L."/>
            <person name="Huson D.H."/>
            <person name="Kravitz S.A."/>
            <person name="Mouchard L."/>
            <person name="Reinert K."/>
            <person name="Remington K.A."/>
            <person name="Clark A.G."/>
            <person name="Waterman M.S."/>
            <person name="Eichler E.E."/>
            <person name="Adams M.D."/>
            <person name="Hunkapiller M.W."/>
            <person name="Myers E.W."/>
            <person name="Venter J.C."/>
        </authorList>
    </citation>
    <scope>NUCLEOTIDE SEQUENCE [LARGE SCALE GENOMIC DNA]</scope>
</reference>
<reference key="8">
    <citation type="journal article" date="2004" name="Genome Res.">
        <title>The status, quality, and expansion of the NIH full-length cDNA project: the Mammalian Gene Collection (MGC).</title>
        <authorList>
            <consortium name="The MGC Project Team"/>
        </authorList>
    </citation>
    <scope>NUCLEOTIDE SEQUENCE [LARGE SCALE MRNA] (ISOFORMS DELTA-1 AND DELTA-2)</scope>
    <source>
        <tissue>Colon</tissue>
        <tissue>Eye</tissue>
        <tissue>Kidney</tissue>
    </source>
</reference>
<reference key="9">
    <citation type="journal article" date="2006" name="Nature">
        <title>Shugoshin collaborates with protein phosphatase 2A to protect cohesin.</title>
        <authorList>
            <person name="Kitajima T.S."/>
            <person name="Sakuno T."/>
            <person name="Ishiguro K."/>
            <person name="Iemura S."/>
            <person name="Natsume T."/>
            <person name="Kawashima S.A."/>
            <person name="Watanabe Y."/>
        </authorList>
    </citation>
    <scope>INTERACTION WITH SGO1</scope>
</reference>
<reference key="10">
    <citation type="journal article" date="2007" name="Science">
        <title>ATM and ATR substrate analysis reveals extensive protein networks responsive to DNA damage.</title>
        <authorList>
            <person name="Matsuoka S."/>
            <person name="Ballif B.A."/>
            <person name="Smogorzewska A."/>
            <person name="McDonald E.R. III"/>
            <person name="Hurov K.E."/>
            <person name="Luo J."/>
            <person name="Bakalarski C.E."/>
            <person name="Zhao Z."/>
            <person name="Solimini N."/>
            <person name="Lerenthal Y."/>
            <person name="Shiloh Y."/>
            <person name="Gygi S.P."/>
            <person name="Elledge S.J."/>
        </authorList>
    </citation>
    <scope>PHOSPHORYLATION [LARGE SCALE ANALYSIS] AT SER-598</scope>
    <scope>IDENTIFICATION BY MASS SPECTROMETRY [LARGE SCALE ANALYSIS]</scope>
    <source>
        <tissue>Embryonic kidney</tissue>
    </source>
</reference>
<reference key="11">
    <citation type="journal article" date="2008" name="Proc. Natl. Acad. Sci. U.S.A.">
        <title>A quantitative atlas of mitotic phosphorylation.</title>
        <authorList>
            <person name="Dephoure N."/>
            <person name="Zhou C."/>
            <person name="Villen J."/>
            <person name="Beausoleil S.A."/>
            <person name="Bakalarski C.E."/>
            <person name="Elledge S.J."/>
            <person name="Gygi S.P."/>
        </authorList>
    </citation>
    <scope>PHOSPHORYLATION [LARGE SCALE ANALYSIS] AT SER-573</scope>
    <scope>IDENTIFICATION BY MASS SPECTROMETRY [LARGE SCALE ANALYSIS]</scope>
    <source>
        <tissue>Cervix carcinoma</tissue>
    </source>
</reference>
<reference key="12">
    <citation type="journal article" date="2011" name="BMC Syst. Biol.">
        <title>Initial characterization of the human central proteome.</title>
        <authorList>
            <person name="Burkard T.R."/>
            <person name="Planyavsky M."/>
            <person name="Kaupe I."/>
            <person name="Breitwieser F.P."/>
            <person name="Buerckstuemmer T."/>
            <person name="Bennett K.L."/>
            <person name="Superti-Furga G."/>
            <person name="Colinge J."/>
        </authorList>
    </citation>
    <scope>IDENTIFICATION BY MASS SPECTROMETRY [LARGE SCALE ANALYSIS]</scope>
</reference>
<reference key="13">
    <citation type="journal article" date="2011" name="Sci. Signal.">
        <title>System-wide temporal characterization of the proteome and phosphoproteome of human embryonic stem cell differentiation.</title>
        <authorList>
            <person name="Rigbolt K.T."/>
            <person name="Prokhorova T.A."/>
            <person name="Akimov V."/>
            <person name="Henningsen J."/>
            <person name="Johansen P.T."/>
            <person name="Kratchmarova I."/>
            <person name="Kassem M."/>
            <person name="Mann M."/>
            <person name="Olsen J.V."/>
            <person name="Blagoev B."/>
        </authorList>
    </citation>
    <scope>PHOSPHORYLATION [LARGE SCALE ANALYSIS] AT SER-573</scope>
    <scope>IDENTIFICATION BY MASS SPECTROMETRY [LARGE SCALE ANALYSIS]</scope>
</reference>
<reference key="14">
    <citation type="journal article" date="2012" name="J. Cell Sci.">
        <title>A key phosphorylation site in AC8 mediates regulation of Ca(2+)-dependent cAMP dynamics by an AC8-AKAP79-PKA signalling complex.</title>
        <authorList>
            <person name="Willoughby D."/>
            <person name="Halls M.L."/>
            <person name="Everett K.L."/>
            <person name="Ciruela A."/>
            <person name="Skroblin P."/>
            <person name="Klussmann E."/>
            <person name="Cooper D.M."/>
        </authorList>
    </citation>
    <scope>INTERACTION WITH ADCY8</scope>
</reference>
<reference key="15">
    <citation type="journal article" date="2013" name="J. Proteome Res.">
        <title>Toward a comprehensive characterization of a human cancer cell phosphoproteome.</title>
        <authorList>
            <person name="Zhou H."/>
            <person name="Di Palma S."/>
            <person name="Preisinger C."/>
            <person name="Peng M."/>
            <person name="Polat A.N."/>
            <person name="Heck A.J."/>
            <person name="Mohammed S."/>
        </authorList>
    </citation>
    <scope>PHOSPHORYLATION [LARGE SCALE ANALYSIS] AT THR-63; SER-88; SER-89; SER-90 AND SER-573</scope>
    <scope>IDENTIFICATION BY MASS SPECTROMETRY [LARGE SCALE ANALYSIS]</scope>
    <source>
        <tissue>Cervix carcinoma</tissue>
        <tissue>Erythroleukemia</tissue>
    </source>
</reference>
<reference key="16">
    <citation type="journal article" date="2023" name="Genes (Basel)">
        <title>Novel Variants of PPP2R1A in Catalytic Subunit Binding Domain and Genotype-Phenotype Analysis in Neurodevelopmentally Delayed Patients.</title>
        <authorList>
            <person name="Qian Y."/>
            <person name="Jiang Y."/>
            <person name="Wang J."/>
            <person name="Li G."/>
            <person name="Wu B."/>
            <person name="Zhou Y."/>
            <person name="Xu X."/>
            <person name="Wang H."/>
        </authorList>
    </citation>
    <scope>INTERACTION WITH PPP2R1A</scope>
</reference>
<reference key="17">
    <citation type="journal article" date="2015" name="Nature">
        <title>Large-scale discovery of novel genetic causes of developmental disorders.</title>
        <authorList>
            <consortium name="Deciphering Developmental Disorders Study"/>
        </authorList>
    </citation>
    <scope>INVOLVEMENT IN HJS1</scope>
    <scope>VARIANTS HJS1 LYS-198 AND ARG-201</scope>
</reference>
<reference key="18">
    <citation type="journal article" date="2012" name="N. Engl. J. Med.">
        <title>Diagnostic exome sequencing in persons with severe intellectual disability.</title>
        <authorList>
            <person name="de Ligt J."/>
            <person name="Willemsen M.H."/>
            <person name="van Bon B.W."/>
            <person name="Kleefstra T."/>
            <person name="Yntema H.G."/>
            <person name="Kroes T."/>
            <person name="Vulto-van Silfhout A.T."/>
            <person name="Koolen D.A."/>
            <person name="de Vries P."/>
            <person name="Gilissen C."/>
            <person name="del Rosario M."/>
            <person name="Hoischen A."/>
            <person name="Scheffer H."/>
            <person name="de Vries B.B."/>
            <person name="Brunner H.G."/>
            <person name="Veltman J.A."/>
            <person name="Vissers L.E."/>
        </authorList>
    </citation>
    <scope>VARIANT SER-53</scope>
</reference>
<reference key="19">
    <citation type="journal article" date="2015" name="J. Clin. Invest.">
        <title>B56delta-related protein phosphatase 2A dysfunction identified in patients with intellectual disability.</title>
        <authorList>
            <person name="Houge G."/>
            <person name="Haesen D."/>
            <person name="Vissers L.E."/>
            <person name="Mehta S."/>
            <person name="Parker M.J."/>
            <person name="Wright M."/>
            <person name="Vogt J."/>
            <person name="McKee S."/>
            <person name="Tolmie J.L."/>
            <person name="Cordeiro N."/>
            <person name="Kleefstra T."/>
            <person name="Willemsen M.H."/>
            <person name="Reijnders M.R."/>
            <person name="Berland S."/>
            <person name="Hayman E."/>
            <person name="Lahat E."/>
            <person name="Brilstra E.H."/>
            <person name="van Gassen K.L."/>
            <person name="Zonneveld-Huijssoon E."/>
            <person name="de Bie C.I."/>
            <person name="Hoischen A."/>
            <person name="Eichler E.E."/>
            <person name="Holdhus R."/>
            <person name="Steen V.M."/>
            <person name="Doeskeland S.O."/>
            <person name="Hurles M.E."/>
            <person name="FitzPatrick D.R."/>
            <person name="Janssens V."/>
        </authorList>
    </citation>
    <scope>VARIANTS HJS1 LYS-198; LYS-200; ARG-201 AND ARG-207</scope>
    <scope>VARIANT SER-53</scope>
    <scope>CHARACTERIZATION OF VARIANTS HJS1 LYS-198; LYS-200; ARG-201 AND ARG-207</scope>
    <scope>CHARACTERIZATION OF VARIANT SER-53</scope>
</reference>
<gene>
    <name type="primary">PPP2R5D</name>
</gene>